<organism>
    <name type="scientific">Exiguobacterium sibiricum (strain DSM 17290 / CCUG 55495 / CIP 109462 / JCM 13490 / 255-15)</name>
    <dbReference type="NCBI Taxonomy" id="262543"/>
    <lineage>
        <taxon>Bacteria</taxon>
        <taxon>Bacillati</taxon>
        <taxon>Bacillota</taxon>
        <taxon>Bacilli</taxon>
        <taxon>Bacillales</taxon>
        <taxon>Bacillales Family XII. Incertae Sedis</taxon>
        <taxon>Exiguobacterium</taxon>
    </lineage>
</organism>
<accession>B1YIU4</accession>
<keyword id="KW-0175">Coiled coil</keyword>
<keyword id="KW-0436">Ligase</keyword>
<keyword id="KW-1185">Reference proteome</keyword>
<sequence>MKVQSFDALYDEDSLMQKASRQEFSKYVDHIGTEGMQARSGLLQERQYPHLNALVDELMRQNPRLNDSLKERLELLRTGEAQVVITGQQTGIFGGPMYAVYKLLTCLKVARQTEELLNRPVLPIFWLATEDHDFDEINHLIVPTHDFRTRKLAIQAPDSISRSVSRLAFDQTAVKDIVRQALCTERETPYTKELLALSDRLIESSTTYGEFFASFMGELVDHDIIFFDADTEAVRQLEIPFFERLIQDNAEIRQALSKGIQETTELPDTFLNEEAAHLFVEDIGRDLLYPGQDFVTKQGKTYTELELLALLYASPERFSNSVVTRPLMQDYLFPTLAYIGGPGEIAYWTRLRPLFHHFDWTMPVLIPRMGAVMLQARDEKGLRRHGLSLEQVLHTGVPLTPFDAAAIKRHLHDATLLGTVLVEEVTRIEQQELRTTAVATKLNKQLQLAVETIVDQKRRLHEQANRSDRALQYQLAPDHAPQERIHSILPWLNRYGLNLVQTLRMHYEQTEAEQLKIML</sequence>
<evidence type="ECO:0000255" key="1">
    <source>
        <dbReference type="HAMAP-Rule" id="MF_01867"/>
    </source>
</evidence>
<name>BSHC_EXIS2</name>
<gene>
    <name evidence="1" type="primary">bshC</name>
    <name type="ordered locus">Exig_1968</name>
</gene>
<proteinExistence type="inferred from homology"/>
<comment type="function">
    <text evidence="1">Involved in bacillithiol (BSH) biosynthesis. May catalyze the last step of the pathway, the addition of cysteine to glucosamine malate (GlcN-Mal) to generate BSH.</text>
</comment>
<comment type="similarity">
    <text evidence="1">Belongs to the BshC family.</text>
</comment>
<dbReference type="EC" id="6.-.-.-" evidence="1"/>
<dbReference type="EMBL" id="CP001022">
    <property type="protein sequence ID" value="ACB61420.1"/>
    <property type="molecule type" value="Genomic_DNA"/>
</dbReference>
<dbReference type="RefSeq" id="WP_012370838.1">
    <property type="nucleotide sequence ID" value="NC_010556.1"/>
</dbReference>
<dbReference type="SMR" id="B1YIU4"/>
<dbReference type="STRING" id="262543.Exig_1968"/>
<dbReference type="KEGG" id="esi:Exig_1968"/>
<dbReference type="eggNOG" id="COG4365">
    <property type="taxonomic scope" value="Bacteria"/>
</dbReference>
<dbReference type="HOGENOM" id="CLU_022249_1_0_9"/>
<dbReference type="OrthoDB" id="9765151at2"/>
<dbReference type="Proteomes" id="UP000001681">
    <property type="component" value="Chromosome"/>
</dbReference>
<dbReference type="GO" id="GO:0016874">
    <property type="term" value="F:ligase activity"/>
    <property type="evidence" value="ECO:0007669"/>
    <property type="project" value="UniProtKB-UniRule"/>
</dbReference>
<dbReference type="HAMAP" id="MF_01867">
    <property type="entry name" value="BshC"/>
    <property type="match status" value="1"/>
</dbReference>
<dbReference type="InterPro" id="IPR011199">
    <property type="entry name" value="Bacillithiol_biosynth_BshC"/>
</dbReference>
<dbReference type="InterPro" id="IPR055399">
    <property type="entry name" value="CC_BshC"/>
</dbReference>
<dbReference type="InterPro" id="IPR055398">
    <property type="entry name" value="Rossmann-like_BshC"/>
</dbReference>
<dbReference type="NCBIfam" id="TIGR03998">
    <property type="entry name" value="thiol_BshC"/>
    <property type="match status" value="1"/>
</dbReference>
<dbReference type="Pfam" id="PF24850">
    <property type="entry name" value="CC_BshC"/>
    <property type="match status" value="1"/>
</dbReference>
<dbReference type="Pfam" id="PF10079">
    <property type="entry name" value="Rossmann-like_BshC"/>
    <property type="match status" value="1"/>
</dbReference>
<dbReference type="PIRSF" id="PIRSF012535">
    <property type="entry name" value="UCP012535"/>
    <property type="match status" value="1"/>
</dbReference>
<protein>
    <recommendedName>
        <fullName evidence="1">Putative cysteine ligase BshC</fullName>
        <ecNumber evidence="1">6.-.-.-</ecNumber>
    </recommendedName>
</protein>
<reference key="1">
    <citation type="submission" date="2008-04" db="EMBL/GenBank/DDBJ databases">
        <title>Complete sequence of chromosome of Exiguobacterium sibiricum 255-15.</title>
        <authorList>
            <consortium name="US DOE Joint Genome Institute"/>
            <person name="Copeland A."/>
            <person name="Lucas S."/>
            <person name="Lapidus A."/>
            <person name="Glavina del Rio T."/>
            <person name="Dalin E."/>
            <person name="Tice H."/>
            <person name="Bruce D."/>
            <person name="Goodwin L."/>
            <person name="Pitluck S."/>
            <person name="Kiss H."/>
            <person name="Chertkov O."/>
            <person name="Monk C."/>
            <person name="Brettin T."/>
            <person name="Detter J.C."/>
            <person name="Han C."/>
            <person name="Kuske C.R."/>
            <person name="Schmutz J."/>
            <person name="Larimer F."/>
            <person name="Land M."/>
            <person name="Hauser L."/>
            <person name="Kyrpides N."/>
            <person name="Mikhailova N."/>
            <person name="Vishnivetskaya T."/>
            <person name="Rodrigues D.F."/>
            <person name="Gilichinsky D."/>
            <person name="Tiedje J."/>
            <person name="Richardson P."/>
        </authorList>
    </citation>
    <scope>NUCLEOTIDE SEQUENCE [LARGE SCALE GENOMIC DNA]</scope>
    <source>
        <strain>DSM 17290 / CCUG 55495 / CIP 109462 / JCM 13490 / 255-15</strain>
    </source>
</reference>
<feature type="chain" id="PRO_0000378235" description="Putative cysteine ligase BshC">
    <location>
        <begin position="1"/>
        <end position="519"/>
    </location>
</feature>
<feature type="coiled-coil region" evidence="1">
    <location>
        <begin position="51"/>
        <end position="71"/>
    </location>
</feature>
<feature type="coiled-coil region" evidence="1">
    <location>
        <begin position="440"/>
        <end position="464"/>
    </location>
</feature>